<dbReference type="EC" id="4.98.1.1"/>
<dbReference type="EMBL" id="D26106">
    <property type="protein sequence ID" value="BAA05102.1"/>
    <property type="molecule type" value="mRNA"/>
</dbReference>
<dbReference type="PIR" id="T10246">
    <property type="entry name" value="T10246"/>
</dbReference>
<dbReference type="RefSeq" id="NP_001295803.1">
    <property type="nucleotide sequence ID" value="NM_001308874.1"/>
</dbReference>
<dbReference type="SMR" id="P42044"/>
<dbReference type="GeneID" id="101216568"/>
<dbReference type="KEGG" id="csv:101216568"/>
<dbReference type="OrthoDB" id="1323at2759"/>
<dbReference type="UniPathway" id="UPA00252">
    <property type="reaction ID" value="UER00325"/>
</dbReference>
<dbReference type="GO" id="GO:0009507">
    <property type="term" value="C:chloroplast"/>
    <property type="evidence" value="ECO:0007669"/>
    <property type="project" value="UniProtKB-SubCell"/>
</dbReference>
<dbReference type="GO" id="GO:0004325">
    <property type="term" value="F:ferrochelatase activity"/>
    <property type="evidence" value="ECO:0007669"/>
    <property type="project" value="InterPro"/>
</dbReference>
<dbReference type="GO" id="GO:0006783">
    <property type="term" value="P:heme biosynthetic process"/>
    <property type="evidence" value="ECO:0007669"/>
    <property type="project" value="UniProtKB-KW"/>
</dbReference>
<dbReference type="CDD" id="cd00419">
    <property type="entry name" value="Ferrochelatase_C"/>
    <property type="match status" value="1"/>
</dbReference>
<dbReference type="CDD" id="cd03411">
    <property type="entry name" value="Ferrochelatase_N"/>
    <property type="match status" value="1"/>
</dbReference>
<dbReference type="FunFam" id="3.40.50.1400:FF:000006">
    <property type="entry name" value="Ferrochelatase"/>
    <property type="match status" value="1"/>
</dbReference>
<dbReference type="Gene3D" id="3.40.50.1400">
    <property type="match status" value="2"/>
</dbReference>
<dbReference type="HAMAP" id="MF_00323">
    <property type="entry name" value="Ferrochelatase"/>
    <property type="match status" value="1"/>
</dbReference>
<dbReference type="InterPro" id="IPR001015">
    <property type="entry name" value="Ferrochelatase"/>
</dbReference>
<dbReference type="InterPro" id="IPR019772">
    <property type="entry name" value="Ferrochelatase_AS"/>
</dbReference>
<dbReference type="InterPro" id="IPR033644">
    <property type="entry name" value="Ferrochelatase_C"/>
</dbReference>
<dbReference type="InterPro" id="IPR033659">
    <property type="entry name" value="Ferrochelatase_N"/>
</dbReference>
<dbReference type="NCBIfam" id="TIGR00109">
    <property type="entry name" value="hemH"/>
    <property type="match status" value="1"/>
</dbReference>
<dbReference type="PANTHER" id="PTHR11108">
    <property type="entry name" value="FERROCHELATASE"/>
    <property type="match status" value="1"/>
</dbReference>
<dbReference type="PANTHER" id="PTHR11108:SF4">
    <property type="entry name" value="FERROCHELATASE-1, CHLOROPLASTIC_MITOCHONDRIAL"/>
    <property type="match status" value="1"/>
</dbReference>
<dbReference type="Pfam" id="PF00762">
    <property type="entry name" value="Ferrochelatase"/>
    <property type="match status" value="1"/>
</dbReference>
<dbReference type="SUPFAM" id="SSF53800">
    <property type="entry name" value="Chelatase"/>
    <property type="match status" value="1"/>
</dbReference>
<dbReference type="PROSITE" id="PS00534">
    <property type="entry name" value="FERROCHELATASE"/>
    <property type="match status" value="1"/>
</dbReference>
<name>HEMH_CUCSA</name>
<organism>
    <name type="scientific">Cucumis sativus</name>
    <name type="common">Cucumber</name>
    <dbReference type="NCBI Taxonomy" id="3659"/>
    <lineage>
        <taxon>Eukaryota</taxon>
        <taxon>Viridiplantae</taxon>
        <taxon>Streptophyta</taxon>
        <taxon>Embryophyta</taxon>
        <taxon>Tracheophyta</taxon>
        <taxon>Spermatophyta</taxon>
        <taxon>Magnoliopsida</taxon>
        <taxon>eudicotyledons</taxon>
        <taxon>Gunneridae</taxon>
        <taxon>Pentapetalae</taxon>
        <taxon>rosids</taxon>
        <taxon>fabids</taxon>
        <taxon>Cucurbitales</taxon>
        <taxon>Cucurbitaceae</taxon>
        <taxon>Benincaseae</taxon>
        <taxon>Cucumis</taxon>
    </lineage>
</organism>
<comment type="function">
    <text>Catalyzes the ferrous insertion into protoporphyrin IX.</text>
</comment>
<comment type="catalytic activity">
    <reaction>
        <text>heme b + 2 H(+) = protoporphyrin IX + Fe(2+)</text>
        <dbReference type="Rhea" id="RHEA:22584"/>
        <dbReference type="ChEBI" id="CHEBI:15378"/>
        <dbReference type="ChEBI" id="CHEBI:29033"/>
        <dbReference type="ChEBI" id="CHEBI:57306"/>
        <dbReference type="ChEBI" id="CHEBI:60344"/>
        <dbReference type="EC" id="4.98.1.1"/>
    </reaction>
</comment>
<comment type="pathway">
    <text>Porphyrin-containing compound metabolism; protoheme biosynthesis; protoheme from protoporphyrin-IX: step 1/1.</text>
</comment>
<comment type="subcellular location">
    <subcellularLocation>
        <location>Plastid</location>
        <location>Chloroplast</location>
    </subcellularLocation>
</comment>
<comment type="similarity">
    <text evidence="2">Belongs to the ferrochelatase family.</text>
</comment>
<feature type="transit peptide" description="Chloroplast" evidence="1">
    <location>
        <begin position="1"/>
        <end status="unknown"/>
    </location>
</feature>
<feature type="chain" id="PRO_0000008882" description="Ferrochelatase-2, chloroplastic">
    <location>
        <begin status="unknown"/>
        <end position="514"/>
    </location>
</feature>
<gene>
    <name type="primary">HEMH</name>
</gene>
<keyword id="KW-0150">Chloroplast</keyword>
<keyword id="KW-0350">Heme biosynthesis</keyword>
<keyword id="KW-0408">Iron</keyword>
<keyword id="KW-0456">Lyase</keyword>
<keyword id="KW-0934">Plastid</keyword>
<keyword id="KW-0627">Porphyrin biosynthesis</keyword>
<keyword id="KW-0809">Transit peptide</keyword>
<reference key="1">
    <citation type="journal article" date="1994" name="Plant Physiol.">
        <title>Nucleotide sequences of cDNA clones encoding ferrochelatase from barley and cucumber.</title>
        <authorList>
            <person name="Miyamoto K."/>
            <person name="Tanaka R."/>
            <person name="Teramoto H."/>
            <person name="Masuda T."/>
            <person name="Tsuji H."/>
            <person name="Inokuchi H."/>
        </authorList>
    </citation>
    <scope>NUCLEOTIDE SEQUENCE [MRNA]</scope>
    <source>
        <strain>cv. Aonagajibai</strain>
    </source>
</reference>
<accession>P42044</accession>
<evidence type="ECO:0000255" key="1"/>
<evidence type="ECO:0000305" key="2"/>
<sequence length="514" mass="57207">MDAASSSLALSNIKLHGSTNTLNSDQRISSLCSLPKSRVTFSCKTSGNLQVRDRSTGLVVSCSSSNGDRDVIQGLHLSGPIEKKSRLGQACCSVGTFTVGEFALESQSQAVDDKVGVLLLNLGGPETLDDVQPFLYNLFADPDIIRLPRLFRFLQEPLAKLISTYRAPKSKEGYASIGGGSPLRKITDEQAQALKMALAEKNMSTNVYVGMRYWYPFTEEAIQQIKRDGITRLVVLPLYPQYSISTTGSSIRVLQKMFREDAYLSSLPVSIIKSWYQREGYIKSMADLMQAELKNFANPQEVMIFFSAHGVPVSYVENAGDPYKDQMEECICLIMQELKARGIGNEHTLAYQSRVGPVQWLKPYTDEVLVELGQKGIKSLLAVPVSFVSEHIETLEEIDMEYKHLALESGIQNWGRVPALNCNSSFISDLADAVIEALPSATALAPHTSSTDADDHDPFLYAIKLLFGSVLAFILLLSPKAFMVFRNNFLLNYTRIYGYRGERSEFFWVRLIFT</sequence>
<protein>
    <recommendedName>
        <fullName>Ferrochelatase-2, chloroplastic</fullName>
        <ecNumber>4.98.1.1</ecNumber>
    </recommendedName>
    <alternativeName>
        <fullName>Ferrochelatase II</fullName>
    </alternativeName>
    <alternativeName>
        <fullName>Heme synthase 2</fullName>
    </alternativeName>
    <alternativeName>
        <fullName>Protoheme ferro-lyase 2</fullName>
    </alternativeName>
</protein>
<proteinExistence type="evidence at transcript level"/>